<protein>
    <recommendedName>
        <fullName>Meiotically up-regulated gene 79 protein</fullName>
    </recommendedName>
</protein>
<dbReference type="EMBL" id="CU329670">
    <property type="protein sequence ID" value="CAB03606.1"/>
    <property type="molecule type" value="Genomic_DNA"/>
</dbReference>
<dbReference type="PIR" id="T39066">
    <property type="entry name" value="T39066"/>
</dbReference>
<dbReference type="RefSeq" id="NP_594113.1">
    <property type="nucleotide sequence ID" value="NM_001019537.2"/>
</dbReference>
<dbReference type="BioGRID" id="277959">
    <property type="interactions" value="48"/>
</dbReference>
<dbReference type="FunCoup" id="Q92349">
    <property type="interactions" value="18"/>
</dbReference>
<dbReference type="STRING" id="284812.Q92349"/>
<dbReference type="iPTMnet" id="Q92349"/>
<dbReference type="PaxDb" id="4896-SPAC6G9.04.1"/>
<dbReference type="EnsemblFungi" id="SPAC6G9.04.1">
    <property type="protein sequence ID" value="SPAC6G9.04.1:pep"/>
    <property type="gene ID" value="SPAC6G9.04"/>
</dbReference>
<dbReference type="GeneID" id="2541456"/>
<dbReference type="KEGG" id="spo:2541456"/>
<dbReference type="PomBase" id="SPAC6G9.04"/>
<dbReference type="VEuPathDB" id="FungiDB:SPAC6G9.04"/>
<dbReference type="HOGENOM" id="CLU_260108_0_0_1"/>
<dbReference type="InParanoid" id="Q92349"/>
<dbReference type="OMA" id="RKSHDFY"/>
<dbReference type="PRO" id="PR:Q92349"/>
<dbReference type="Proteomes" id="UP000002485">
    <property type="component" value="Chromosome I"/>
</dbReference>
<dbReference type="GO" id="GO:0005737">
    <property type="term" value="C:cytoplasm"/>
    <property type="evidence" value="ECO:0007005"/>
    <property type="project" value="PomBase"/>
</dbReference>
<dbReference type="GO" id="GO:0035974">
    <property type="term" value="C:meiotic spindle pole body"/>
    <property type="evidence" value="ECO:0000314"/>
    <property type="project" value="PomBase"/>
</dbReference>
<dbReference type="GO" id="GO:0072686">
    <property type="term" value="C:mitotic spindle"/>
    <property type="evidence" value="ECO:0007005"/>
    <property type="project" value="PomBase"/>
</dbReference>
<dbReference type="GO" id="GO:0005635">
    <property type="term" value="C:nuclear envelope"/>
    <property type="evidence" value="ECO:0007005"/>
    <property type="project" value="PomBase"/>
</dbReference>
<dbReference type="GO" id="GO:0034399">
    <property type="term" value="C:nuclear periphery"/>
    <property type="evidence" value="ECO:0000314"/>
    <property type="project" value="PomBase"/>
</dbReference>
<dbReference type="GO" id="GO:0005085">
    <property type="term" value="F:guanyl-nucleotide exchange factor activity"/>
    <property type="evidence" value="ECO:0007669"/>
    <property type="project" value="InterPro"/>
</dbReference>
<dbReference type="GO" id="GO:0032266">
    <property type="term" value="F:phosphatidylinositol-3-phosphate binding"/>
    <property type="evidence" value="ECO:0000315"/>
    <property type="project" value="PomBase"/>
</dbReference>
<dbReference type="GO" id="GO:0032120">
    <property type="term" value="P:ascospore-type prospore membrane formation"/>
    <property type="evidence" value="ECO:0000315"/>
    <property type="project" value="PomBase"/>
</dbReference>
<dbReference type="GO" id="GO:0031322">
    <property type="term" value="P:ascospore-type prospore-specific spindle pole body remodeling"/>
    <property type="evidence" value="ECO:0000315"/>
    <property type="project" value="PomBase"/>
</dbReference>
<dbReference type="GO" id="GO:0032012">
    <property type="term" value="P:regulation of ARF protein signal transduction"/>
    <property type="evidence" value="ECO:0007669"/>
    <property type="project" value="InterPro"/>
</dbReference>
<dbReference type="GO" id="GO:0070583">
    <property type="term" value="P:spore membrane bending pathway"/>
    <property type="evidence" value="ECO:0000315"/>
    <property type="project" value="PomBase"/>
</dbReference>
<dbReference type="CDD" id="cd00821">
    <property type="entry name" value="PH"/>
    <property type="match status" value="1"/>
</dbReference>
<dbReference type="Gene3D" id="2.30.29.30">
    <property type="entry name" value="Pleckstrin-homology domain (PH domain)/Phosphotyrosine-binding domain (PTB)"/>
    <property type="match status" value="1"/>
</dbReference>
<dbReference type="InterPro" id="IPR011993">
    <property type="entry name" value="PH-like_dom_sf"/>
</dbReference>
<dbReference type="InterPro" id="IPR001849">
    <property type="entry name" value="PH_domain"/>
</dbReference>
<dbReference type="InterPro" id="IPR000904">
    <property type="entry name" value="Sec7_dom"/>
</dbReference>
<dbReference type="InterPro" id="IPR035999">
    <property type="entry name" value="Sec7_dom_sf"/>
</dbReference>
<dbReference type="Pfam" id="PF00169">
    <property type="entry name" value="PH"/>
    <property type="match status" value="1"/>
</dbReference>
<dbReference type="Pfam" id="PF01369">
    <property type="entry name" value="Sec7"/>
    <property type="match status" value="1"/>
</dbReference>
<dbReference type="SMART" id="SM00233">
    <property type="entry name" value="PH"/>
    <property type="match status" value="1"/>
</dbReference>
<dbReference type="SUPFAM" id="SSF50729">
    <property type="entry name" value="PH domain-like"/>
    <property type="match status" value="1"/>
</dbReference>
<dbReference type="SUPFAM" id="SSF48425">
    <property type="entry name" value="Sec7 domain"/>
    <property type="match status" value="1"/>
</dbReference>
<dbReference type="PROSITE" id="PS50003">
    <property type="entry name" value="PH_DOMAIN"/>
    <property type="match status" value="1"/>
</dbReference>
<gene>
    <name type="primary">mug79</name>
    <name type="ORF">SPAC6G9.04</name>
</gene>
<proteinExistence type="evidence at protein level"/>
<accession>Q92349</accession>
<evidence type="ECO:0000255" key="1">
    <source>
        <dbReference type="PROSITE-ProRule" id="PRU00145"/>
    </source>
</evidence>
<evidence type="ECO:0000256" key="2">
    <source>
        <dbReference type="SAM" id="MobiDB-lite"/>
    </source>
</evidence>
<evidence type="ECO:0000269" key="3">
    <source>
    </source>
</evidence>
<evidence type="ECO:0000269" key="4">
    <source>
    </source>
</evidence>
<feature type="chain" id="PRO_0000116628" description="Meiotically up-regulated gene 79 protein">
    <location>
        <begin position="1"/>
        <end position="1318"/>
    </location>
</feature>
<feature type="domain" description="PH" evidence="1">
    <location>
        <begin position="1049"/>
        <end position="1158"/>
    </location>
</feature>
<feature type="region of interest" description="Disordered" evidence="2">
    <location>
        <begin position="177"/>
        <end position="198"/>
    </location>
</feature>
<feature type="region of interest" description="Disordered" evidence="2">
    <location>
        <begin position="208"/>
        <end position="227"/>
    </location>
</feature>
<feature type="region of interest" description="Disordered" evidence="2">
    <location>
        <begin position="360"/>
        <end position="387"/>
    </location>
</feature>
<feature type="compositionally biased region" description="Low complexity" evidence="2">
    <location>
        <begin position="364"/>
        <end position="384"/>
    </location>
</feature>
<reference key="1">
    <citation type="journal article" date="2002" name="Nature">
        <title>The genome sequence of Schizosaccharomyces pombe.</title>
        <authorList>
            <person name="Wood V."/>
            <person name="Gwilliam R."/>
            <person name="Rajandream M.A."/>
            <person name="Lyne M.H."/>
            <person name="Lyne R."/>
            <person name="Stewart A."/>
            <person name="Sgouros J.G."/>
            <person name="Peat N."/>
            <person name="Hayles J."/>
            <person name="Baker S.G."/>
            <person name="Basham D."/>
            <person name="Bowman S."/>
            <person name="Brooks K."/>
            <person name="Brown D."/>
            <person name="Brown S."/>
            <person name="Chillingworth T."/>
            <person name="Churcher C.M."/>
            <person name="Collins M."/>
            <person name="Connor R."/>
            <person name="Cronin A."/>
            <person name="Davis P."/>
            <person name="Feltwell T."/>
            <person name="Fraser A."/>
            <person name="Gentles S."/>
            <person name="Goble A."/>
            <person name="Hamlin N."/>
            <person name="Harris D.E."/>
            <person name="Hidalgo J."/>
            <person name="Hodgson G."/>
            <person name="Holroyd S."/>
            <person name="Hornsby T."/>
            <person name="Howarth S."/>
            <person name="Huckle E.J."/>
            <person name="Hunt S."/>
            <person name="Jagels K."/>
            <person name="James K.D."/>
            <person name="Jones L."/>
            <person name="Jones M."/>
            <person name="Leather S."/>
            <person name="McDonald S."/>
            <person name="McLean J."/>
            <person name="Mooney P."/>
            <person name="Moule S."/>
            <person name="Mungall K.L."/>
            <person name="Murphy L.D."/>
            <person name="Niblett D."/>
            <person name="Odell C."/>
            <person name="Oliver K."/>
            <person name="O'Neil S."/>
            <person name="Pearson D."/>
            <person name="Quail M.A."/>
            <person name="Rabbinowitsch E."/>
            <person name="Rutherford K.M."/>
            <person name="Rutter S."/>
            <person name="Saunders D."/>
            <person name="Seeger K."/>
            <person name="Sharp S."/>
            <person name="Skelton J."/>
            <person name="Simmonds M.N."/>
            <person name="Squares R."/>
            <person name="Squares S."/>
            <person name="Stevens K."/>
            <person name="Taylor K."/>
            <person name="Taylor R.G."/>
            <person name="Tivey A."/>
            <person name="Walsh S.V."/>
            <person name="Warren T."/>
            <person name="Whitehead S."/>
            <person name="Woodward J.R."/>
            <person name="Volckaert G."/>
            <person name="Aert R."/>
            <person name="Robben J."/>
            <person name="Grymonprez B."/>
            <person name="Weltjens I."/>
            <person name="Vanstreels E."/>
            <person name="Rieger M."/>
            <person name="Schaefer M."/>
            <person name="Mueller-Auer S."/>
            <person name="Gabel C."/>
            <person name="Fuchs M."/>
            <person name="Duesterhoeft A."/>
            <person name="Fritzc C."/>
            <person name="Holzer E."/>
            <person name="Moestl D."/>
            <person name="Hilbert H."/>
            <person name="Borzym K."/>
            <person name="Langer I."/>
            <person name="Beck A."/>
            <person name="Lehrach H."/>
            <person name="Reinhardt R."/>
            <person name="Pohl T.M."/>
            <person name="Eger P."/>
            <person name="Zimmermann W."/>
            <person name="Wedler H."/>
            <person name="Wambutt R."/>
            <person name="Purnelle B."/>
            <person name="Goffeau A."/>
            <person name="Cadieu E."/>
            <person name="Dreano S."/>
            <person name="Gloux S."/>
            <person name="Lelaure V."/>
            <person name="Mottier S."/>
            <person name="Galibert F."/>
            <person name="Aves S.J."/>
            <person name="Xiang Z."/>
            <person name="Hunt C."/>
            <person name="Moore K."/>
            <person name="Hurst S.M."/>
            <person name="Lucas M."/>
            <person name="Rochet M."/>
            <person name="Gaillardin C."/>
            <person name="Tallada V.A."/>
            <person name="Garzon A."/>
            <person name="Thode G."/>
            <person name="Daga R.R."/>
            <person name="Cruzado L."/>
            <person name="Jimenez J."/>
            <person name="Sanchez M."/>
            <person name="del Rey F."/>
            <person name="Benito J."/>
            <person name="Dominguez A."/>
            <person name="Revuelta J.L."/>
            <person name="Moreno S."/>
            <person name="Armstrong J."/>
            <person name="Forsburg S.L."/>
            <person name="Cerutti L."/>
            <person name="Lowe T."/>
            <person name="McCombie W.R."/>
            <person name="Paulsen I."/>
            <person name="Potashkin J."/>
            <person name="Shpakovski G.V."/>
            <person name="Ussery D."/>
            <person name="Barrell B.G."/>
            <person name="Nurse P."/>
        </authorList>
    </citation>
    <scope>NUCLEOTIDE SEQUENCE [LARGE SCALE GENOMIC DNA]</scope>
    <source>
        <strain>972 / ATCC 24843</strain>
    </source>
</reference>
<reference key="2">
    <citation type="journal article" date="2005" name="Curr. Biol.">
        <title>A large-scale screen in S. pombe identifies seven novel genes required for critical meiotic events.</title>
        <authorList>
            <person name="Martin-Castellanos C."/>
            <person name="Blanco M."/>
            <person name="Rozalen A.E."/>
            <person name="Perez-Hidalgo L."/>
            <person name="Garcia A.I."/>
            <person name="Conde F."/>
            <person name="Mata J."/>
            <person name="Ellermeier C."/>
            <person name="Davis L."/>
            <person name="San-Segundo P."/>
            <person name="Smith G.R."/>
            <person name="Moreno S."/>
        </authorList>
    </citation>
    <scope>FUNCTION IN SPORULATION</scope>
</reference>
<reference key="3">
    <citation type="journal article" date="2006" name="Nat. Biotechnol.">
        <title>ORFeome cloning and global analysis of protein localization in the fission yeast Schizosaccharomyces pombe.</title>
        <authorList>
            <person name="Matsuyama A."/>
            <person name="Arai R."/>
            <person name="Yashiroda Y."/>
            <person name="Shirai A."/>
            <person name="Kamata A."/>
            <person name="Sekido S."/>
            <person name="Kobayashi Y."/>
            <person name="Hashimoto A."/>
            <person name="Hamamoto M."/>
            <person name="Hiraoka Y."/>
            <person name="Horinouchi S."/>
            <person name="Yoshida M."/>
        </authorList>
    </citation>
    <scope>SUBCELLULAR LOCATION [LARGE SCALE ANALYSIS]</scope>
</reference>
<comment type="function">
    <text evidence="3">Appears to have a role in sporulation.</text>
</comment>
<comment type="subcellular location">
    <subcellularLocation>
        <location evidence="4">Nucleus</location>
    </subcellularLocation>
</comment>
<name>MUG79_SCHPO</name>
<sequence>MDFRITEGSSPTSLSVSEKIAKLESCNDSRITCRPVRESKPTYTSGQKHSALLSKLKRSKVTTDFCKLEESKGIICQENLHTEGAKSKTENISGEDKSSQRRTRLKQIQEFISHRRSFLNSNANSVESEKILAENNHMFNVKSKLSNKESFIKTRRPRTNGELSDLSLQPKRIFSEPVNSHPSQSMFGNGVRASSGSYSLKRDLKDYEEELPSSKKRQRTPPPIVVTNFPQEIFPSKKISLSAKRRIQGKYSGENVRARIELARERNRKRDYVSNLSKGHTTNALEENPFNLGPNYRASTRKCNRIKEAINLFAAKNGSMEVPPKVSVGDSVLTTSQKFLQVIREKTALLMNQDSNSVQPQALAAAESPTTKAPTTKAPTSEAPPKGHVKQLAKQLGNIYMPQSINNVEPTSHSSISKVVNPSEKVISKIERACLAGNGNVHPSIKMEKNLELNPHPRTLNATEHKINSRIQVSKLNTKNELANADPKMYLLENLSDRLYFCKLAKLLLRKYPLDIAEHQFALVYSRFQRIPLKQISCLKQSLVAYYSVLSEVGITNEIMLRENRFSSPKTPEGLVSISKLLLDDREHLSHDERSYIQQLQSQIKSQSVHHENAAEEIRKMRNLRNSRINSQQVGEKVFVNPDVKTMDIQETFLQDYEDETFANEGLSASKFKEEFLLISDSKSDLNSEEIATPNSLEFKNNPRIKVPRSLLTILNLHDRSQLKLFEVCHNSEFKDPINLSNCLRNLLEKQLLSYNFTDWFASLGSEYENVYVKFISHYDFSSLNVYASFQKLCCDLYYGSDDYIHSPILQVFASCWLKQNSNYGFLNEDIIVKIVLILIDLHKSTYSKKLNSYVVPMETFVKYALEKLRPLISPDSVCILSKEDKKHWLKYKKNRSTFAKLLFSTWSNLPSDIGFILECMLKEYYDTFLKSPFAVPNAVQAQLHNQVRGDLTPKRNRSSLISELMKSSKLLKQESSGNKNSTSLESDAFKESSFVLNEENGGIYAGKEIDLPEPSVIDGRPHFSVFNYTHHMQEEKTHNRLPWHRRGMISYKKMVLSKNNRWVAGYWKKKYCIVDSGKLIFYKSDHLDPNACSNVSPIHREFGLQSCLASPNLPPSINSNRNNVFYLNIPGNECYLFEAPSVLAMNEWIHSLNFNAAMITCPPLPENITNTEYGWGYILTRAEKKAYYTAADGTKTFVGDLAQLTRWSPMDIQGLQDIPRPLRDKVHILRDCVPSLLETCLLFQSLPEKMEKCFAAGSKNYLKAMDNWNRKMKFLYERSMMYKEYQRVLECEYEYRKSHDFYPTLSPVRYPYDFKGL</sequence>
<keyword id="KW-0469">Meiosis</keyword>
<keyword id="KW-0539">Nucleus</keyword>
<keyword id="KW-1185">Reference proteome</keyword>
<keyword id="KW-0749">Sporulation</keyword>
<organism>
    <name type="scientific">Schizosaccharomyces pombe (strain 972 / ATCC 24843)</name>
    <name type="common">Fission yeast</name>
    <dbReference type="NCBI Taxonomy" id="284812"/>
    <lineage>
        <taxon>Eukaryota</taxon>
        <taxon>Fungi</taxon>
        <taxon>Dikarya</taxon>
        <taxon>Ascomycota</taxon>
        <taxon>Taphrinomycotina</taxon>
        <taxon>Schizosaccharomycetes</taxon>
        <taxon>Schizosaccharomycetales</taxon>
        <taxon>Schizosaccharomycetaceae</taxon>
        <taxon>Schizosaccharomyces</taxon>
    </lineage>
</organism>